<dbReference type="EC" id="3.1.-.-"/>
<dbReference type="GO" id="GO:0016787">
    <property type="term" value="F:hydrolase activity"/>
    <property type="evidence" value="ECO:0007669"/>
    <property type="project" value="UniProtKB-KW"/>
</dbReference>
<dbReference type="GO" id="GO:0042742">
    <property type="term" value="P:defense response to bacterium"/>
    <property type="evidence" value="ECO:0007669"/>
    <property type="project" value="UniProtKB-KW"/>
</dbReference>
<dbReference type="GO" id="GO:0050832">
    <property type="term" value="P:defense response to fungus"/>
    <property type="evidence" value="ECO:0007669"/>
    <property type="project" value="UniProtKB-KW"/>
</dbReference>
<dbReference type="GO" id="GO:0031640">
    <property type="term" value="P:killing of cells of another organism"/>
    <property type="evidence" value="ECO:0007669"/>
    <property type="project" value="UniProtKB-KW"/>
</dbReference>
<sequence length="10" mass="1016">DNGEAGRAAR</sequence>
<protein>
    <recommendedName>
        <fullName>Antimicrobial ribonuclease</fullName>
        <ecNumber>3.1.-.-</ecNumber>
    </recommendedName>
</protein>
<organism>
    <name type="scientific">Pleurotus sajor-caju</name>
    <name type="common">Oyster mushroom</name>
    <dbReference type="NCBI Taxonomy" id="50053"/>
    <lineage>
        <taxon>Eukaryota</taxon>
        <taxon>Fungi</taxon>
        <taxon>Dikarya</taxon>
        <taxon>Basidiomycota</taxon>
        <taxon>Agaricomycotina</taxon>
        <taxon>Agaricomycetes</taxon>
        <taxon>Polyporales</taxon>
        <taxon>Polyporaceae</taxon>
        <taxon>Lentinus</taxon>
    </lineage>
</organism>
<accession>P84528</accession>
<evidence type="ECO:0000269" key="1">
    <source>
    </source>
</evidence>
<evidence type="ECO:0000303" key="2">
    <source>
    </source>
</evidence>
<evidence type="ECO:0000305" key="3"/>
<reference evidence="3" key="1">
    <citation type="journal article" date="2004" name="Peptides">
        <title>A ribonuclease with antimicrobial, antimitogenic and antiproliferative activities from the edible mushroom Pleurotus sajor-caju.</title>
        <authorList>
            <person name="Ngai P.H.K."/>
            <person name="Ng T.B."/>
        </authorList>
    </citation>
    <scope>PROTEIN SEQUENCE</scope>
    <scope>FUNCTION</scope>
    <scope>ACTIVITY REGULATION</scope>
    <scope>BIOPHYSICOCHEMICAL PROPERTIES</scope>
    <scope>SUBUNIT</scope>
    <source>
        <tissue evidence="1">Fruiting body</tissue>
    </source>
</reference>
<name>RNAM_PLESA</name>
<feature type="chain" id="PRO_0000137380" description="Antimicrobial ribonuclease">
    <location>
        <begin position="1"/>
        <end position="10" status="greater than"/>
    </location>
</feature>
<feature type="non-terminal residue" evidence="2">
    <location>
        <position position="10"/>
    </location>
</feature>
<proteinExistence type="evidence at protein level"/>
<comment type="function">
    <text evidence="1">Has ribonuclease activity towards yeast tRNA and polyuracil and weak ribonuclease activity towards other polyhomoribonucleotides. Has weak deoxyribonuclease activity. Displays antimitogenic activity towards murine splenocytes and antiproliferative activity towards HepG2 hepatoma cells and L1210 leukemia cells. Has antibacterial activity against Gram-negative bacteria P.aeruginosa and P.fluorescens, and the Gram-positive bacterium S.aureus. No antibacterial activity against the Gram-positive bacteria B.subtilis, B.cereus, B.megaterium, M.luteus and M.phei, or the Gram-negative bacteria E.coli and E.aerogenes. Has antifungal activity against F.oxysporum and M.oxysporum.</text>
</comment>
<comment type="activity regulation">
    <text evidence="1">Inhibited by sodium ion, potassium ion, magnesium ion, calcium ion, Cu(2+) ion, zinc ion and Fe(3+) ion.</text>
</comment>
<comment type="biophysicochemical properties">
    <phDependence>
        <text evidence="1">Optimum pH is from 5.5 to 6.0.</text>
    </phDependence>
    <temperatureDependence>
        <text evidence="1">Optimum temperature below 60 degrees Celsius. Active from 0 to 100 degrees Celsius.</text>
    </temperatureDependence>
</comment>
<comment type="subunit">
    <text evidence="1">Monomer.</text>
</comment>
<keyword id="KW-0044">Antibiotic</keyword>
<keyword id="KW-0929">Antimicrobial</keyword>
<keyword id="KW-0903">Direct protein sequencing</keyword>
<keyword id="KW-0295">Fungicide</keyword>
<keyword id="KW-0378">Hydrolase</keyword>